<name>RL2_CANGA</name>
<dbReference type="EMBL" id="CR380956">
    <property type="protein sequence ID" value="CAG60756.1"/>
    <property type="molecule type" value="Genomic_DNA"/>
</dbReference>
<dbReference type="RefSeq" id="XP_447807.1">
    <property type="nucleotide sequence ID" value="XM_447807.1"/>
</dbReference>
<dbReference type="SMR" id="Q6FPN7"/>
<dbReference type="FunCoup" id="Q6FPN7">
    <property type="interactions" value="1376"/>
</dbReference>
<dbReference type="STRING" id="284593.Q6FPN7"/>
<dbReference type="EnsemblFungi" id="CAGL0J02354g-T">
    <property type="protein sequence ID" value="CAGL0J02354g-T-p1"/>
    <property type="gene ID" value="CAGL0J02354g"/>
</dbReference>
<dbReference type="KEGG" id="cgr:2889760"/>
<dbReference type="CGD" id="CAL0133490">
    <property type="gene designation" value="CAGL0J02354g"/>
</dbReference>
<dbReference type="VEuPathDB" id="FungiDB:B1J91_J02354g"/>
<dbReference type="VEuPathDB" id="FungiDB:CAGL0J02354g"/>
<dbReference type="eggNOG" id="KOG2309">
    <property type="taxonomic scope" value="Eukaryota"/>
</dbReference>
<dbReference type="HOGENOM" id="CLU_036235_0_3_1"/>
<dbReference type="InParanoid" id="Q6FPN7"/>
<dbReference type="OMA" id="HPYKFKM"/>
<dbReference type="Proteomes" id="UP000002428">
    <property type="component" value="Chromosome J"/>
</dbReference>
<dbReference type="GO" id="GO:0022625">
    <property type="term" value="C:cytosolic large ribosomal subunit"/>
    <property type="evidence" value="ECO:0007669"/>
    <property type="project" value="TreeGrafter"/>
</dbReference>
<dbReference type="GO" id="GO:0019843">
    <property type="term" value="F:rRNA binding"/>
    <property type="evidence" value="ECO:0007669"/>
    <property type="project" value="UniProtKB-KW"/>
</dbReference>
<dbReference type="GO" id="GO:0003735">
    <property type="term" value="F:structural constituent of ribosome"/>
    <property type="evidence" value="ECO:0007669"/>
    <property type="project" value="InterPro"/>
</dbReference>
<dbReference type="GO" id="GO:0002181">
    <property type="term" value="P:cytoplasmic translation"/>
    <property type="evidence" value="ECO:0007669"/>
    <property type="project" value="TreeGrafter"/>
</dbReference>
<dbReference type="FunFam" id="2.40.50.140:FF:000020">
    <property type="entry name" value="60S ribosomal protein L2"/>
    <property type="match status" value="1"/>
</dbReference>
<dbReference type="FunFam" id="4.10.950.10:FF:000002">
    <property type="entry name" value="60S ribosomal protein L2"/>
    <property type="match status" value="1"/>
</dbReference>
<dbReference type="FunFam" id="2.30.30.30:FF:000006">
    <property type="entry name" value="60S ribosomal protein L8"/>
    <property type="match status" value="1"/>
</dbReference>
<dbReference type="Gene3D" id="2.30.30.30">
    <property type="match status" value="1"/>
</dbReference>
<dbReference type="Gene3D" id="2.40.50.140">
    <property type="entry name" value="Nucleic acid-binding proteins"/>
    <property type="match status" value="1"/>
</dbReference>
<dbReference type="Gene3D" id="4.10.950.10">
    <property type="entry name" value="Ribosomal protein L2, domain 3"/>
    <property type="match status" value="1"/>
</dbReference>
<dbReference type="InterPro" id="IPR012340">
    <property type="entry name" value="NA-bd_OB-fold"/>
</dbReference>
<dbReference type="InterPro" id="IPR014722">
    <property type="entry name" value="Rib_uL2_dom2"/>
</dbReference>
<dbReference type="InterPro" id="IPR002171">
    <property type="entry name" value="Ribosomal_uL2"/>
</dbReference>
<dbReference type="InterPro" id="IPR022669">
    <property type="entry name" value="Ribosomal_uL2_C"/>
</dbReference>
<dbReference type="InterPro" id="IPR022671">
    <property type="entry name" value="Ribosomal_uL2_CS"/>
</dbReference>
<dbReference type="InterPro" id="IPR014726">
    <property type="entry name" value="Ribosomal_uL2_dom3"/>
</dbReference>
<dbReference type="InterPro" id="IPR022666">
    <property type="entry name" value="Ribosomal_uL2_RNA-bd_dom"/>
</dbReference>
<dbReference type="InterPro" id="IPR008991">
    <property type="entry name" value="Translation_prot_SH3-like_sf"/>
</dbReference>
<dbReference type="PANTHER" id="PTHR13691:SF16">
    <property type="entry name" value="LARGE RIBOSOMAL SUBUNIT PROTEIN UL2"/>
    <property type="match status" value="1"/>
</dbReference>
<dbReference type="PANTHER" id="PTHR13691">
    <property type="entry name" value="RIBOSOMAL PROTEIN L2"/>
    <property type="match status" value="1"/>
</dbReference>
<dbReference type="Pfam" id="PF00181">
    <property type="entry name" value="Ribosomal_L2"/>
    <property type="match status" value="1"/>
</dbReference>
<dbReference type="Pfam" id="PF03947">
    <property type="entry name" value="Ribosomal_L2_C"/>
    <property type="match status" value="1"/>
</dbReference>
<dbReference type="PIRSF" id="PIRSF002158">
    <property type="entry name" value="Ribosomal_L2"/>
    <property type="match status" value="1"/>
</dbReference>
<dbReference type="SMART" id="SM01383">
    <property type="entry name" value="Ribosomal_L2"/>
    <property type="match status" value="1"/>
</dbReference>
<dbReference type="SMART" id="SM01382">
    <property type="entry name" value="Ribosomal_L2_C"/>
    <property type="match status" value="1"/>
</dbReference>
<dbReference type="SUPFAM" id="SSF50249">
    <property type="entry name" value="Nucleic acid-binding proteins"/>
    <property type="match status" value="1"/>
</dbReference>
<dbReference type="SUPFAM" id="SSF50104">
    <property type="entry name" value="Translation proteins SH3-like domain"/>
    <property type="match status" value="1"/>
</dbReference>
<dbReference type="PROSITE" id="PS00467">
    <property type="entry name" value="RIBOSOMAL_L2"/>
    <property type="match status" value="1"/>
</dbReference>
<feature type="chain" id="PRO_0000129759" description="Large ribosomal subunit protein uL2">
    <location>
        <begin position="1"/>
        <end position="254"/>
    </location>
</feature>
<evidence type="ECO:0000305" key="1"/>
<comment type="similarity">
    <text evidence="1">Belongs to the universal ribosomal protein uL2 family.</text>
</comment>
<organism>
    <name type="scientific">Candida glabrata (strain ATCC 2001 / BCRC 20586 / JCM 3761 / NBRC 0622 / NRRL Y-65 / CBS 138)</name>
    <name type="common">Yeast</name>
    <name type="synonym">Nakaseomyces glabratus</name>
    <dbReference type="NCBI Taxonomy" id="284593"/>
    <lineage>
        <taxon>Eukaryota</taxon>
        <taxon>Fungi</taxon>
        <taxon>Dikarya</taxon>
        <taxon>Ascomycota</taxon>
        <taxon>Saccharomycotina</taxon>
        <taxon>Saccharomycetes</taxon>
        <taxon>Saccharomycetales</taxon>
        <taxon>Saccharomycetaceae</taxon>
        <taxon>Nakaseomyces</taxon>
    </lineage>
</organism>
<protein>
    <recommendedName>
        <fullName evidence="1">Large ribosomal subunit protein uL2</fullName>
    </recommendedName>
    <alternativeName>
        <fullName>60S ribosomal protein L2</fullName>
    </alternativeName>
</protein>
<keyword id="KW-1185">Reference proteome</keyword>
<keyword id="KW-0687">Ribonucleoprotein</keyword>
<keyword id="KW-0689">Ribosomal protein</keyword>
<keyword id="KW-0694">RNA-binding</keyword>
<keyword id="KW-0699">rRNA-binding</keyword>
<sequence length="254" mass="27338">MGRVIRNQRKGAGSIFTSHTRLRQGAAKLRTLDYAERHGYIRGVVKQIVHDAGRGAPLAKVVFRDPYKYKLREEIFIANEGVHTGQFIYAGKKASLNVGNVLPLGSVPEGTIVSNVEEKPGDRGALARASGNYVIIIGHNPDENKTRVRLPSGAKKIISSDARGVIGVIAGGGRTDKPLLKAGRAFHKYKLKRNSWPKTRGVAMNPVDHPHGGGNHQHIGKASTISRGAVSGQKAGLIAARRTGLLRGSQKTQD</sequence>
<accession>Q6FPN7</accession>
<reference key="1">
    <citation type="journal article" date="2004" name="Nature">
        <title>Genome evolution in yeasts.</title>
        <authorList>
            <person name="Dujon B."/>
            <person name="Sherman D."/>
            <person name="Fischer G."/>
            <person name="Durrens P."/>
            <person name="Casaregola S."/>
            <person name="Lafontaine I."/>
            <person name="de Montigny J."/>
            <person name="Marck C."/>
            <person name="Neuveglise C."/>
            <person name="Talla E."/>
            <person name="Goffard N."/>
            <person name="Frangeul L."/>
            <person name="Aigle M."/>
            <person name="Anthouard V."/>
            <person name="Babour A."/>
            <person name="Barbe V."/>
            <person name="Barnay S."/>
            <person name="Blanchin S."/>
            <person name="Beckerich J.-M."/>
            <person name="Beyne E."/>
            <person name="Bleykasten C."/>
            <person name="Boisrame A."/>
            <person name="Boyer J."/>
            <person name="Cattolico L."/>
            <person name="Confanioleri F."/>
            <person name="de Daruvar A."/>
            <person name="Despons L."/>
            <person name="Fabre E."/>
            <person name="Fairhead C."/>
            <person name="Ferry-Dumazet H."/>
            <person name="Groppi A."/>
            <person name="Hantraye F."/>
            <person name="Hennequin C."/>
            <person name="Jauniaux N."/>
            <person name="Joyet P."/>
            <person name="Kachouri R."/>
            <person name="Kerrest A."/>
            <person name="Koszul R."/>
            <person name="Lemaire M."/>
            <person name="Lesur I."/>
            <person name="Ma L."/>
            <person name="Muller H."/>
            <person name="Nicaud J.-M."/>
            <person name="Nikolski M."/>
            <person name="Oztas S."/>
            <person name="Ozier-Kalogeropoulos O."/>
            <person name="Pellenz S."/>
            <person name="Potier S."/>
            <person name="Richard G.-F."/>
            <person name="Straub M.-L."/>
            <person name="Suleau A."/>
            <person name="Swennen D."/>
            <person name="Tekaia F."/>
            <person name="Wesolowski-Louvel M."/>
            <person name="Westhof E."/>
            <person name="Wirth B."/>
            <person name="Zeniou-Meyer M."/>
            <person name="Zivanovic Y."/>
            <person name="Bolotin-Fukuhara M."/>
            <person name="Thierry A."/>
            <person name="Bouchier C."/>
            <person name="Caudron B."/>
            <person name="Scarpelli C."/>
            <person name="Gaillardin C."/>
            <person name="Weissenbach J."/>
            <person name="Wincker P."/>
            <person name="Souciet J.-L."/>
        </authorList>
    </citation>
    <scope>NUCLEOTIDE SEQUENCE [LARGE SCALE GENOMIC DNA]</scope>
    <source>
        <strain>ATCC 2001 / BCRC 20586 / JCM 3761 / NBRC 0622 / NRRL Y-65 / CBS 138</strain>
    </source>
</reference>
<gene>
    <name type="primary">RPL2</name>
    <name type="ordered locus">CAGL0J02354g</name>
</gene>
<proteinExistence type="inferred from homology"/>